<comment type="similarity">
    <text evidence="2">Belongs to the WD repeat PWP2 family.</text>
</comment>
<gene>
    <name type="ORF">F55F8.3</name>
</gene>
<proteinExistence type="inferred from homology"/>
<accession>P91341</accession>
<sequence length="910" mass="102197">MDTNFKLSNCIGTVYRDGQVAFSKDGYSVISPIGNKLSIFDLRNNTSKTLDIDCNYNIKRLSISPSGYHLLASDERGVVHFVHLLSEFKIYTFRSNKPIGSLQWSPDATRVAICRENDLQIHEFGKSIENKVYNPFSLSRTYKLSSDSLKTIDWSDDANLLVSGGEDRVVRVVGAKDFKNLFIHPLASHKGYIVNCQFMKNSYDMITVCKRGLANVWTCNLRPGELVEGIWKKDEEGSDDIEMLEDGEQKVEKIFFEKTKKYWLSESSGSGKSVDVTAARFHKETNILATAFNNGVIVLHEIPSFALVHNLRVSEMRIQTVAWNLTGDWLAIGCGKGSTAQLVVWEWQSESYVMKQQAHSLRITTAEYSPDGSLMATGAEDGKVKIWNSRSSFCTVTFDEHTSGVTAVKWTQSGRAILSASLDGTVRAHDLKRYRNFRTLVCPEPTQLATLAVDKAGDLVIAGAKEVFNIYIWSFETGHLLDILSGHESAISSIDIHGNHIVSGSWDRTIKMWTIVDSQAETVEVSHEALDVKFSPAGDEIAVLTSDGVITFFEAKEMINLGSIDTKLDTDPARGSRDTITRQSAAKTKTFTRIRFSPDGNLLLAGGESNNFCLYSVPERMILKKWQITANRSLDGVILDFNRRNFTEFGNMQLVDTSDEEDELEPNNKMSIKLPGTKNFDLGERRARPEVNIYEVTYCPTGRRFAICSTEGVSVYSLDTISMFDPFQLDSQTNAEVIKRAVWNNDYSTAIMASLRLNNAQYITECLESTSISQIPLVASSLPLMYAERLLKWMVEGNVMSSTRHVHFYMIWLRAILQHHGMQLKGRADVATLTGIQQIVAHHQQHITKLANQNKFALNWLVKIRQSKKSVKKEEEEEEDVSDESDDEDIEDESAGSDDEDSDDSVEIIE</sequence>
<evidence type="ECO:0000256" key="1">
    <source>
        <dbReference type="SAM" id="MobiDB-lite"/>
    </source>
</evidence>
<evidence type="ECO:0000305" key="2"/>
<keyword id="KW-1185">Reference proteome</keyword>
<keyword id="KW-0677">Repeat</keyword>
<keyword id="KW-0853">WD repeat</keyword>
<feature type="chain" id="PRO_0000051174" description="Periodic tryptophan protein 2 homolog">
    <location>
        <begin position="1"/>
        <end position="910"/>
    </location>
</feature>
<feature type="repeat" description="WD 1">
    <location>
        <begin position="12"/>
        <end position="50"/>
    </location>
</feature>
<feature type="repeat" description="WD 2">
    <location>
        <begin position="53"/>
        <end position="92"/>
    </location>
</feature>
<feature type="repeat" description="WD 3">
    <location>
        <begin position="94"/>
        <end position="134"/>
    </location>
</feature>
<feature type="repeat" description="WD 4">
    <location>
        <begin position="144"/>
        <end position="183"/>
    </location>
</feature>
<feature type="repeat" description="WD 5">
    <location>
        <begin position="188"/>
        <end position="227"/>
    </location>
</feature>
<feature type="repeat" description="WD 6">
    <location>
        <begin position="271"/>
        <end position="310"/>
    </location>
</feature>
<feature type="repeat" description="WD 7">
    <location>
        <begin position="313"/>
        <end position="355"/>
    </location>
</feature>
<feature type="repeat" description="WD 8">
    <location>
        <begin position="358"/>
        <end position="397"/>
    </location>
</feature>
<feature type="repeat" description="WD 9">
    <location>
        <begin position="400"/>
        <end position="439"/>
    </location>
</feature>
<feature type="repeat" description="WD 10">
    <location>
        <begin position="443"/>
        <end position="485"/>
    </location>
</feature>
<feature type="repeat" description="WD 11">
    <location>
        <begin position="486"/>
        <end position="523"/>
    </location>
</feature>
<feature type="repeat" description="WD 12">
    <location>
        <begin position="525"/>
        <end position="563"/>
    </location>
</feature>
<feature type="repeat" description="WD 13">
    <location>
        <begin position="586"/>
        <end position="625"/>
    </location>
</feature>
<feature type="repeat" description="WD 14">
    <location>
        <begin position="688"/>
        <end position="728"/>
    </location>
</feature>
<feature type="region of interest" description="Disordered" evidence="1">
    <location>
        <begin position="867"/>
        <end position="910"/>
    </location>
</feature>
<feature type="compositionally biased region" description="Acidic residues" evidence="1">
    <location>
        <begin position="875"/>
        <end position="910"/>
    </location>
</feature>
<reference key="1">
    <citation type="journal article" date="1998" name="Science">
        <title>Genome sequence of the nematode C. elegans: a platform for investigating biology.</title>
        <authorList>
            <consortium name="The C. elegans sequencing consortium"/>
        </authorList>
    </citation>
    <scope>NUCLEOTIDE SEQUENCE [LARGE SCALE GENOMIC DNA]</scope>
    <source>
        <strain>Bristol N2</strain>
    </source>
</reference>
<protein>
    <recommendedName>
        <fullName>Periodic tryptophan protein 2 homolog</fullName>
    </recommendedName>
</protein>
<organism>
    <name type="scientific">Caenorhabditis elegans</name>
    <dbReference type="NCBI Taxonomy" id="6239"/>
    <lineage>
        <taxon>Eukaryota</taxon>
        <taxon>Metazoa</taxon>
        <taxon>Ecdysozoa</taxon>
        <taxon>Nematoda</taxon>
        <taxon>Chromadorea</taxon>
        <taxon>Rhabditida</taxon>
        <taxon>Rhabditina</taxon>
        <taxon>Rhabditomorpha</taxon>
        <taxon>Rhabditoidea</taxon>
        <taxon>Rhabditidae</taxon>
        <taxon>Peloderinae</taxon>
        <taxon>Caenorhabditis</taxon>
    </lineage>
</organism>
<dbReference type="EMBL" id="FO081477">
    <property type="protein sequence ID" value="CCD71885.1"/>
    <property type="molecule type" value="Genomic_DNA"/>
</dbReference>
<dbReference type="PIR" id="T29585">
    <property type="entry name" value="T29585"/>
</dbReference>
<dbReference type="RefSeq" id="NP_491653.2">
    <property type="nucleotide sequence ID" value="NM_059252.5"/>
</dbReference>
<dbReference type="SMR" id="P91341"/>
<dbReference type="BioGRID" id="37682">
    <property type="interactions" value="11"/>
</dbReference>
<dbReference type="FunCoup" id="P91341">
    <property type="interactions" value="2091"/>
</dbReference>
<dbReference type="STRING" id="6239.F55F8.3.1"/>
<dbReference type="iPTMnet" id="P91341"/>
<dbReference type="PaxDb" id="6239-F55F8.3"/>
<dbReference type="PeptideAtlas" id="P91341"/>
<dbReference type="EnsemblMetazoa" id="F55F8.3.1">
    <property type="protein sequence ID" value="F55F8.3.1"/>
    <property type="gene ID" value="WBGene00018891"/>
</dbReference>
<dbReference type="GeneID" id="172224"/>
<dbReference type="KEGG" id="cel:CELE_F55F8.3"/>
<dbReference type="UCSC" id="F55F8.3">
    <property type="organism name" value="c. elegans"/>
</dbReference>
<dbReference type="AGR" id="WB:WBGene00018891"/>
<dbReference type="CTD" id="172224"/>
<dbReference type="WormBase" id="F55F8.3">
    <property type="protein sequence ID" value="CE30542"/>
    <property type="gene ID" value="WBGene00018891"/>
</dbReference>
<dbReference type="eggNOG" id="KOG0291">
    <property type="taxonomic scope" value="Eukaryota"/>
</dbReference>
<dbReference type="GeneTree" id="ENSGT00550000074981"/>
<dbReference type="HOGENOM" id="CLU_010458_0_0_1"/>
<dbReference type="InParanoid" id="P91341"/>
<dbReference type="OMA" id="VYEWQSE"/>
<dbReference type="OrthoDB" id="3142434at2759"/>
<dbReference type="PhylomeDB" id="P91341"/>
<dbReference type="Reactome" id="R-CEL-6791226">
    <property type="pathway name" value="Major pathway of rRNA processing in the nucleolus and cytosol"/>
</dbReference>
<dbReference type="PRO" id="PR:P91341"/>
<dbReference type="Proteomes" id="UP000001940">
    <property type="component" value="Chromosome I"/>
</dbReference>
<dbReference type="Bgee" id="WBGene00018891">
    <property type="expression patterns" value="Expressed in germ line (C elegans) and 4 other cell types or tissues"/>
</dbReference>
<dbReference type="GO" id="GO:0034388">
    <property type="term" value="C:Pwp2p-containing subcomplex of 90S preribosome"/>
    <property type="evidence" value="ECO:0000318"/>
    <property type="project" value="GO_Central"/>
</dbReference>
<dbReference type="GO" id="GO:0032040">
    <property type="term" value="C:small-subunit processome"/>
    <property type="evidence" value="ECO:0000318"/>
    <property type="project" value="GO_Central"/>
</dbReference>
<dbReference type="GO" id="GO:0000462">
    <property type="term" value="P:maturation of SSU-rRNA from tricistronic rRNA transcript (SSU-rRNA, 5.8S rRNA, LSU-rRNA)"/>
    <property type="evidence" value="ECO:0000318"/>
    <property type="project" value="GO_Central"/>
</dbReference>
<dbReference type="GO" id="GO:0000028">
    <property type="term" value="P:ribosomal small subunit assembly"/>
    <property type="evidence" value="ECO:0000318"/>
    <property type="project" value="GO_Central"/>
</dbReference>
<dbReference type="FunFam" id="2.130.10.10:FF:001379">
    <property type="entry name" value="Periodic tryptophan protein 2 homolog"/>
    <property type="match status" value="1"/>
</dbReference>
<dbReference type="FunFam" id="2.130.10.10:FF:001661">
    <property type="entry name" value="Periodic tryptophan protein 2 homolog"/>
    <property type="match status" value="1"/>
</dbReference>
<dbReference type="FunFam" id="2.130.10.10:FF:001714">
    <property type="entry name" value="Periodic tryptophan protein 2 homolog"/>
    <property type="match status" value="1"/>
</dbReference>
<dbReference type="Gene3D" id="2.130.10.10">
    <property type="entry name" value="YVTN repeat-like/Quinoprotein amine dehydrogenase"/>
    <property type="match status" value="3"/>
</dbReference>
<dbReference type="InterPro" id="IPR027145">
    <property type="entry name" value="PWP2"/>
</dbReference>
<dbReference type="InterPro" id="IPR011044">
    <property type="entry name" value="Quino_amine_DH_bsu"/>
</dbReference>
<dbReference type="InterPro" id="IPR007148">
    <property type="entry name" value="SSU_processome_Utp12"/>
</dbReference>
<dbReference type="InterPro" id="IPR015943">
    <property type="entry name" value="WD40/YVTN_repeat-like_dom_sf"/>
</dbReference>
<dbReference type="InterPro" id="IPR019775">
    <property type="entry name" value="WD40_repeat_CS"/>
</dbReference>
<dbReference type="InterPro" id="IPR036322">
    <property type="entry name" value="WD40_repeat_dom_sf"/>
</dbReference>
<dbReference type="InterPro" id="IPR001680">
    <property type="entry name" value="WD40_rpt"/>
</dbReference>
<dbReference type="PANTHER" id="PTHR19858:SF0">
    <property type="entry name" value="PERIODIC TRYPTOPHAN PROTEIN 2 HOMOLOG"/>
    <property type="match status" value="1"/>
</dbReference>
<dbReference type="PANTHER" id="PTHR19858">
    <property type="entry name" value="WD40 REPEAT PROTEIN"/>
    <property type="match status" value="1"/>
</dbReference>
<dbReference type="Pfam" id="PF04003">
    <property type="entry name" value="Utp12"/>
    <property type="match status" value="1"/>
</dbReference>
<dbReference type="Pfam" id="PF00400">
    <property type="entry name" value="WD40"/>
    <property type="match status" value="4"/>
</dbReference>
<dbReference type="SMART" id="SM00320">
    <property type="entry name" value="WD40"/>
    <property type="match status" value="12"/>
</dbReference>
<dbReference type="SUPFAM" id="SSF50978">
    <property type="entry name" value="WD40 repeat-like"/>
    <property type="match status" value="2"/>
</dbReference>
<dbReference type="SUPFAM" id="SSF50969">
    <property type="entry name" value="YVTN repeat-like/Quinoprotein amine dehydrogenase"/>
    <property type="match status" value="1"/>
</dbReference>
<dbReference type="PROSITE" id="PS00678">
    <property type="entry name" value="WD_REPEATS_1"/>
    <property type="match status" value="1"/>
</dbReference>
<dbReference type="PROSITE" id="PS50082">
    <property type="entry name" value="WD_REPEATS_2"/>
    <property type="match status" value="3"/>
</dbReference>
<dbReference type="PROSITE" id="PS50294">
    <property type="entry name" value="WD_REPEATS_REGION"/>
    <property type="match status" value="2"/>
</dbReference>
<name>PWP2_CAEEL</name>